<evidence type="ECO:0000255" key="1">
    <source>
        <dbReference type="HAMAP-Rule" id="MF_01818"/>
    </source>
</evidence>
<sequence length="305" mass="32933">MELIFLGTSAGVPTRTRNVTAILLNLQHPTQSGLWLFDCGEGTQHQLLHTAFNPGKLDKIFISHLHGDHLFGLPGLLCSRSMSGIIQPLTIYGPQGIREFVETALRISGSWTDYPLEIVEIGAGEILDDGLRKVTAYPLEHPLECYGYRIEEHDKPGALNAQALKAAGVPPGPLFQELKAGKTITLEDGRQINGADYLAAPVPGKALAIFGDTGPCDAALDLAKGVDVMVHEATLDITMEAKANSRGHSSTRQAATLAREAGVGMLIITHVSSRYDDKGCQHLLRECRSIFPATELANDFTVFNV</sequence>
<dbReference type="EC" id="3.1.-.-" evidence="1"/>
<dbReference type="EMBL" id="CU928145">
    <property type="protein sequence ID" value="CAU98384.1"/>
    <property type="molecule type" value="Genomic_DNA"/>
</dbReference>
<dbReference type="RefSeq" id="WP_001326256.1">
    <property type="nucleotide sequence ID" value="NC_011748.1"/>
</dbReference>
<dbReference type="SMR" id="B7LAT4"/>
<dbReference type="GeneID" id="75205681"/>
<dbReference type="KEGG" id="eck:EC55989_2516"/>
<dbReference type="HOGENOM" id="CLU_031317_2_0_6"/>
<dbReference type="Proteomes" id="UP000000746">
    <property type="component" value="Chromosome"/>
</dbReference>
<dbReference type="GO" id="GO:0042781">
    <property type="term" value="F:3'-tRNA processing endoribonuclease activity"/>
    <property type="evidence" value="ECO:0007669"/>
    <property type="project" value="TreeGrafter"/>
</dbReference>
<dbReference type="GO" id="GO:0004527">
    <property type="term" value="F:exonuclease activity"/>
    <property type="evidence" value="ECO:0007669"/>
    <property type="project" value="UniProtKB-UniRule"/>
</dbReference>
<dbReference type="GO" id="GO:0008270">
    <property type="term" value="F:zinc ion binding"/>
    <property type="evidence" value="ECO:0007669"/>
    <property type="project" value="UniProtKB-UniRule"/>
</dbReference>
<dbReference type="CDD" id="cd07717">
    <property type="entry name" value="RNaseZ_ZiPD-like_MBL-fold"/>
    <property type="match status" value="1"/>
</dbReference>
<dbReference type="FunFam" id="3.60.15.10:FF:000002">
    <property type="entry name" value="Ribonuclease Z"/>
    <property type="match status" value="1"/>
</dbReference>
<dbReference type="Gene3D" id="3.60.15.10">
    <property type="entry name" value="Ribonuclease Z/Hydroxyacylglutathione hydrolase-like"/>
    <property type="match status" value="1"/>
</dbReference>
<dbReference type="HAMAP" id="MF_01818">
    <property type="entry name" value="RNase_Z_BN"/>
    <property type="match status" value="1"/>
</dbReference>
<dbReference type="InterPro" id="IPR001279">
    <property type="entry name" value="Metallo-B-lactamas"/>
</dbReference>
<dbReference type="InterPro" id="IPR036866">
    <property type="entry name" value="RibonucZ/Hydroxyglut_hydro"/>
</dbReference>
<dbReference type="InterPro" id="IPR013469">
    <property type="entry name" value="Rnase_BN"/>
</dbReference>
<dbReference type="InterPro" id="IPR013471">
    <property type="entry name" value="RNase_Z/BN"/>
</dbReference>
<dbReference type="NCBIfam" id="NF000800">
    <property type="entry name" value="PRK00055.1-1"/>
    <property type="match status" value="1"/>
</dbReference>
<dbReference type="NCBIfam" id="NF000801">
    <property type="entry name" value="PRK00055.1-3"/>
    <property type="match status" value="1"/>
</dbReference>
<dbReference type="NCBIfam" id="TIGR02651">
    <property type="entry name" value="RNase_Z"/>
    <property type="match status" value="1"/>
</dbReference>
<dbReference type="NCBIfam" id="TIGR02649">
    <property type="entry name" value="true_RNase_BN"/>
    <property type="match status" value="1"/>
</dbReference>
<dbReference type="PANTHER" id="PTHR46018">
    <property type="entry name" value="ZINC PHOSPHODIESTERASE ELAC PROTEIN 1"/>
    <property type="match status" value="1"/>
</dbReference>
<dbReference type="PANTHER" id="PTHR46018:SF2">
    <property type="entry name" value="ZINC PHOSPHODIESTERASE ELAC PROTEIN 1"/>
    <property type="match status" value="1"/>
</dbReference>
<dbReference type="Pfam" id="PF12706">
    <property type="entry name" value="Lactamase_B_2"/>
    <property type="match status" value="1"/>
</dbReference>
<dbReference type="SMART" id="SM00849">
    <property type="entry name" value="Lactamase_B"/>
    <property type="match status" value="1"/>
</dbReference>
<dbReference type="SUPFAM" id="SSF56281">
    <property type="entry name" value="Metallo-hydrolase/oxidoreductase"/>
    <property type="match status" value="1"/>
</dbReference>
<protein>
    <recommendedName>
        <fullName evidence="1">Ribonuclease BN</fullName>
        <shortName evidence="1">RNase BN</shortName>
        <ecNumber evidence="1">3.1.-.-</ecNumber>
    </recommendedName>
    <alternativeName>
        <fullName evidence="1">Ribonuclease Z homolog</fullName>
        <shortName evidence="1">RNase Z homolog</shortName>
    </alternativeName>
</protein>
<gene>
    <name evidence="1" type="primary">rbn</name>
    <name type="synonym">rnz</name>
    <name type="ordered locus">EC55989_2516</name>
</gene>
<comment type="function">
    <text evidence="1">Zinc phosphodiesterase, which has both exoribonuclease and endoribonuclease activities.</text>
</comment>
<comment type="cofactor">
    <cofactor evidence="1">
        <name>Zn(2+)</name>
        <dbReference type="ChEBI" id="CHEBI:29105"/>
    </cofactor>
    <text evidence="1">Binds 2 Zn(2+) ions.</text>
</comment>
<comment type="subunit">
    <text evidence="1">Homodimer.</text>
</comment>
<comment type="similarity">
    <text evidence="1">Belongs to the RNase Z family. RNase BN subfamily.</text>
</comment>
<reference key="1">
    <citation type="journal article" date="2009" name="PLoS Genet.">
        <title>Organised genome dynamics in the Escherichia coli species results in highly diverse adaptive paths.</title>
        <authorList>
            <person name="Touchon M."/>
            <person name="Hoede C."/>
            <person name="Tenaillon O."/>
            <person name="Barbe V."/>
            <person name="Baeriswyl S."/>
            <person name="Bidet P."/>
            <person name="Bingen E."/>
            <person name="Bonacorsi S."/>
            <person name="Bouchier C."/>
            <person name="Bouvet O."/>
            <person name="Calteau A."/>
            <person name="Chiapello H."/>
            <person name="Clermont O."/>
            <person name="Cruveiller S."/>
            <person name="Danchin A."/>
            <person name="Diard M."/>
            <person name="Dossat C."/>
            <person name="Karoui M.E."/>
            <person name="Frapy E."/>
            <person name="Garry L."/>
            <person name="Ghigo J.M."/>
            <person name="Gilles A.M."/>
            <person name="Johnson J."/>
            <person name="Le Bouguenec C."/>
            <person name="Lescat M."/>
            <person name="Mangenot S."/>
            <person name="Martinez-Jehanne V."/>
            <person name="Matic I."/>
            <person name="Nassif X."/>
            <person name="Oztas S."/>
            <person name="Petit M.A."/>
            <person name="Pichon C."/>
            <person name="Rouy Z."/>
            <person name="Ruf C.S."/>
            <person name="Schneider D."/>
            <person name="Tourret J."/>
            <person name="Vacherie B."/>
            <person name="Vallenet D."/>
            <person name="Medigue C."/>
            <person name="Rocha E.P.C."/>
            <person name="Denamur E."/>
        </authorList>
    </citation>
    <scope>NUCLEOTIDE SEQUENCE [LARGE SCALE GENOMIC DNA]</scope>
    <source>
        <strain>55989 / EAEC</strain>
    </source>
</reference>
<proteinExistence type="inferred from homology"/>
<organism>
    <name type="scientific">Escherichia coli (strain 55989 / EAEC)</name>
    <dbReference type="NCBI Taxonomy" id="585055"/>
    <lineage>
        <taxon>Bacteria</taxon>
        <taxon>Pseudomonadati</taxon>
        <taxon>Pseudomonadota</taxon>
        <taxon>Gammaproteobacteria</taxon>
        <taxon>Enterobacterales</taxon>
        <taxon>Enterobacteriaceae</taxon>
        <taxon>Escherichia</taxon>
    </lineage>
</organism>
<name>RBN_ECO55</name>
<accession>B7LAT4</accession>
<keyword id="KW-0255">Endonuclease</keyword>
<keyword id="KW-0269">Exonuclease</keyword>
<keyword id="KW-0378">Hydrolase</keyword>
<keyword id="KW-0479">Metal-binding</keyword>
<keyword id="KW-0540">Nuclease</keyword>
<keyword id="KW-1185">Reference proteome</keyword>
<keyword id="KW-0819">tRNA processing</keyword>
<keyword id="KW-0862">Zinc</keyword>
<feature type="chain" id="PRO_1000187954" description="Ribonuclease BN">
    <location>
        <begin position="1"/>
        <end position="305"/>
    </location>
</feature>
<feature type="active site" description="Proton acceptor" evidence="1">
    <location>
        <position position="68"/>
    </location>
</feature>
<feature type="binding site" evidence="1">
    <location>
        <position position="64"/>
    </location>
    <ligand>
        <name>Zn(2+)</name>
        <dbReference type="ChEBI" id="CHEBI:29105"/>
        <label>1</label>
        <note>catalytic</note>
    </ligand>
</feature>
<feature type="binding site" evidence="1">
    <location>
        <position position="66"/>
    </location>
    <ligand>
        <name>Zn(2+)</name>
        <dbReference type="ChEBI" id="CHEBI:29105"/>
        <label>1</label>
        <note>catalytic</note>
    </ligand>
</feature>
<feature type="binding site" evidence="1">
    <location>
        <position position="68"/>
    </location>
    <ligand>
        <name>Zn(2+)</name>
        <dbReference type="ChEBI" id="CHEBI:29105"/>
        <label>2</label>
        <note>catalytic</note>
    </ligand>
</feature>
<feature type="binding site" evidence="1">
    <location>
        <position position="69"/>
    </location>
    <ligand>
        <name>Zn(2+)</name>
        <dbReference type="ChEBI" id="CHEBI:29105"/>
        <label>2</label>
        <note>catalytic</note>
    </ligand>
</feature>
<feature type="binding site" evidence="1">
    <location>
        <position position="141"/>
    </location>
    <ligand>
        <name>Zn(2+)</name>
        <dbReference type="ChEBI" id="CHEBI:29105"/>
        <label>1</label>
        <note>catalytic</note>
    </ligand>
</feature>
<feature type="binding site" evidence="1">
    <location>
        <position position="212"/>
    </location>
    <ligand>
        <name>Zn(2+)</name>
        <dbReference type="ChEBI" id="CHEBI:29105"/>
        <label>1</label>
        <note>catalytic</note>
    </ligand>
</feature>
<feature type="binding site" evidence="1">
    <location>
        <position position="212"/>
    </location>
    <ligand>
        <name>Zn(2+)</name>
        <dbReference type="ChEBI" id="CHEBI:29105"/>
        <label>2</label>
        <note>catalytic</note>
    </ligand>
</feature>
<feature type="binding site" evidence="1">
    <location>
        <position position="270"/>
    </location>
    <ligand>
        <name>Zn(2+)</name>
        <dbReference type="ChEBI" id="CHEBI:29105"/>
        <label>2</label>
        <note>catalytic</note>
    </ligand>
</feature>